<comment type="function">
    <text evidence="1">Part of the phosphoribosylformylglycinamidine synthase complex involved in the purines biosynthetic pathway. Catalyzes the ATP-dependent conversion of formylglycinamide ribonucleotide (FGAR) and glutamine to yield formylglycinamidine ribonucleotide (FGAM) and glutamate. The FGAM synthase complex is composed of three subunits. PurQ produces an ammonia molecule by converting glutamine to glutamate. PurL transfers the ammonia molecule to FGAR to form FGAM in an ATP-dependent manner. PurS interacts with PurQ and PurL and is thought to assist in the transfer of the ammonia molecule from PurQ to PurL.</text>
</comment>
<comment type="catalytic activity">
    <reaction evidence="1">
        <text>N(2)-formyl-N(1)-(5-phospho-beta-D-ribosyl)glycinamide + L-glutamine + ATP + H2O = 2-formamido-N(1)-(5-O-phospho-beta-D-ribosyl)acetamidine + L-glutamate + ADP + phosphate + H(+)</text>
        <dbReference type="Rhea" id="RHEA:17129"/>
        <dbReference type="ChEBI" id="CHEBI:15377"/>
        <dbReference type="ChEBI" id="CHEBI:15378"/>
        <dbReference type="ChEBI" id="CHEBI:29985"/>
        <dbReference type="ChEBI" id="CHEBI:30616"/>
        <dbReference type="ChEBI" id="CHEBI:43474"/>
        <dbReference type="ChEBI" id="CHEBI:58359"/>
        <dbReference type="ChEBI" id="CHEBI:147286"/>
        <dbReference type="ChEBI" id="CHEBI:147287"/>
        <dbReference type="ChEBI" id="CHEBI:456216"/>
        <dbReference type="EC" id="6.3.5.3"/>
    </reaction>
</comment>
<comment type="catalytic activity">
    <reaction evidence="1">
        <text>L-glutamine + H2O = L-glutamate + NH4(+)</text>
        <dbReference type="Rhea" id="RHEA:15889"/>
        <dbReference type="ChEBI" id="CHEBI:15377"/>
        <dbReference type="ChEBI" id="CHEBI:28938"/>
        <dbReference type="ChEBI" id="CHEBI:29985"/>
        <dbReference type="ChEBI" id="CHEBI:58359"/>
        <dbReference type="EC" id="3.5.1.2"/>
    </reaction>
</comment>
<comment type="pathway">
    <text evidence="1">Purine metabolism; IMP biosynthesis via de novo pathway; 5-amino-1-(5-phospho-D-ribosyl)imidazole from N(2)-formyl-N(1)-(5-phospho-D-ribosyl)glycinamide: step 1/2.</text>
</comment>
<comment type="subunit">
    <text evidence="1">Part of the FGAM synthase complex composed of 1 PurL, 1 PurQ and 2 PurS subunits.</text>
</comment>
<comment type="subcellular location">
    <subcellularLocation>
        <location evidence="1">Cytoplasm</location>
    </subcellularLocation>
</comment>
<reference key="1">
    <citation type="journal article" date="2003" name="Nature">
        <title>The genome sequence of Bacillus anthracis Ames and comparison to closely related bacteria.</title>
        <authorList>
            <person name="Read T.D."/>
            <person name="Peterson S.N."/>
            <person name="Tourasse N.J."/>
            <person name="Baillie L.W."/>
            <person name="Paulsen I.T."/>
            <person name="Nelson K.E."/>
            <person name="Tettelin H."/>
            <person name="Fouts D.E."/>
            <person name="Eisen J.A."/>
            <person name="Gill S.R."/>
            <person name="Holtzapple E.K."/>
            <person name="Okstad O.A."/>
            <person name="Helgason E."/>
            <person name="Rilstone J."/>
            <person name="Wu M."/>
            <person name="Kolonay J.F."/>
            <person name="Beanan M.J."/>
            <person name="Dodson R.J."/>
            <person name="Brinkac L.M."/>
            <person name="Gwinn M.L."/>
            <person name="DeBoy R.T."/>
            <person name="Madpu R."/>
            <person name="Daugherty S.C."/>
            <person name="Durkin A.S."/>
            <person name="Haft D.H."/>
            <person name="Nelson W.C."/>
            <person name="Peterson J.D."/>
            <person name="Pop M."/>
            <person name="Khouri H.M."/>
            <person name="Radune D."/>
            <person name="Benton J.L."/>
            <person name="Mahamoud Y."/>
            <person name="Jiang L."/>
            <person name="Hance I.R."/>
            <person name="Weidman J.F."/>
            <person name="Berry K.J."/>
            <person name="Plaut R.D."/>
            <person name="Wolf A.M."/>
            <person name="Watkins K.L."/>
            <person name="Nierman W.C."/>
            <person name="Hazen A."/>
            <person name="Cline R.T."/>
            <person name="Redmond C."/>
            <person name="Thwaite J.E."/>
            <person name="White O."/>
            <person name="Salzberg S.L."/>
            <person name="Thomason B."/>
            <person name="Friedlander A.M."/>
            <person name="Koehler T.M."/>
            <person name="Hanna P.C."/>
            <person name="Kolstoe A.-B."/>
            <person name="Fraser C.M."/>
        </authorList>
    </citation>
    <scope>NUCLEOTIDE SEQUENCE [LARGE SCALE GENOMIC DNA]</scope>
    <source>
        <strain>Ames / isolate Porton</strain>
    </source>
</reference>
<reference key="2">
    <citation type="journal article" date="2009" name="J. Bacteriol.">
        <title>The complete genome sequence of Bacillus anthracis Ames 'Ancestor'.</title>
        <authorList>
            <person name="Ravel J."/>
            <person name="Jiang L."/>
            <person name="Stanley S.T."/>
            <person name="Wilson M.R."/>
            <person name="Decker R.S."/>
            <person name="Read T.D."/>
            <person name="Worsham P."/>
            <person name="Keim P.S."/>
            <person name="Salzberg S.L."/>
            <person name="Fraser-Liggett C.M."/>
            <person name="Rasko D.A."/>
        </authorList>
    </citation>
    <scope>NUCLEOTIDE SEQUENCE [LARGE SCALE GENOMIC DNA]</scope>
    <source>
        <strain>Ames ancestor</strain>
    </source>
</reference>
<reference key="3">
    <citation type="submission" date="2004-01" db="EMBL/GenBank/DDBJ databases">
        <title>Complete genome sequence of Bacillus anthracis Sterne.</title>
        <authorList>
            <person name="Brettin T.S."/>
            <person name="Bruce D."/>
            <person name="Challacombe J.F."/>
            <person name="Gilna P."/>
            <person name="Han C."/>
            <person name="Hill K."/>
            <person name="Hitchcock P."/>
            <person name="Jackson P."/>
            <person name="Keim P."/>
            <person name="Longmire J."/>
            <person name="Lucas S."/>
            <person name="Okinaka R."/>
            <person name="Richardson P."/>
            <person name="Rubin E."/>
            <person name="Tice H."/>
        </authorList>
    </citation>
    <scope>NUCLEOTIDE SEQUENCE [LARGE SCALE GENOMIC DNA]</scope>
    <source>
        <strain>Sterne</strain>
    </source>
</reference>
<accession>Q81ZH3</accession>
<accession>Q6I4C0</accession>
<accession>Q6KY22</accession>
<keyword id="KW-0067">ATP-binding</keyword>
<keyword id="KW-0963">Cytoplasm</keyword>
<keyword id="KW-0315">Glutamine amidotransferase</keyword>
<keyword id="KW-0378">Hydrolase</keyword>
<keyword id="KW-0436">Ligase</keyword>
<keyword id="KW-0547">Nucleotide-binding</keyword>
<keyword id="KW-0658">Purine biosynthesis</keyword>
<keyword id="KW-1185">Reference proteome</keyword>
<feature type="chain" id="PRO_0000100531" description="Phosphoribosylformylglycinamidine synthase subunit PurQ">
    <location>
        <begin position="1"/>
        <end position="227"/>
    </location>
</feature>
<feature type="domain" description="Glutamine amidotransferase type-1" evidence="1">
    <location>
        <begin position="3"/>
        <end position="225"/>
    </location>
</feature>
<feature type="active site" description="Nucleophile" evidence="1">
    <location>
        <position position="86"/>
    </location>
</feature>
<feature type="active site" evidence="1">
    <location>
        <position position="194"/>
    </location>
</feature>
<feature type="active site" evidence="1">
    <location>
        <position position="196"/>
    </location>
</feature>
<dbReference type="EC" id="6.3.5.3" evidence="1"/>
<dbReference type="EC" id="3.5.1.2" evidence="1"/>
<dbReference type="EMBL" id="AE016879">
    <property type="protein sequence ID" value="AAP24329.1"/>
    <property type="molecule type" value="Genomic_DNA"/>
</dbReference>
<dbReference type="EMBL" id="AE017334">
    <property type="protein sequence ID" value="AAT29380.1"/>
    <property type="molecule type" value="Genomic_DNA"/>
</dbReference>
<dbReference type="EMBL" id="AE017225">
    <property type="protein sequence ID" value="AAT52611.1"/>
    <property type="molecule type" value="Genomic_DNA"/>
</dbReference>
<dbReference type="RefSeq" id="NP_842843.1">
    <property type="nucleotide sequence ID" value="NC_003997.3"/>
</dbReference>
<dbReference type="RefSeq" id="WP_000666779.1">
    <property type="nucleotide sequence ID" value="NZ_WXXJ01000007.1"/>
</dbReference>
<dbReference type="RefSeq" id="YP_026560.1">
    <property type="nucleotide sequence ID" value="NC_005945.1"/>
</dbReference>
<dbReference type="SMR" id="Q81ZH3"/>
<dbReference type="STRING" id="261594.GBAA_0293"/>
<dbReference type="DNASU" id="1085624"/>
<dbReference type="GeneID" id="69534103"/>
<dbReference type="KEGG" id="ban:BA_0293"/>
<dbReference type="KEGG" id="banh:HYU01_01605"/>
<dbReference type="KEGG" id="bar:GBAA_0293"/>
<dbReference type="KEGG" id="bat:BAS0280"/>
<dbReference type="PATRIC" id="fig|198094.11.peg.284"/>
<dbReference type="eggNOG" id="COG0047">
    <property type="taxonomic scope" value="Bacteria"/>
</dbReference>
<dbReference type="HOGENOM" id="CLU_001031_3_1_9"/>
<dbReference type="OMA" id="SNCDHDC"/>
<dbReference type="OrthoDB" id="9804441at2"/>
<dbReference type="UniPathway" id="UPA00074">
    <property type="reaction ID" value="UER00128"/>
</dbReference>
<dbReference type="Proteomes" id="UP000000427">
    <property type="component" value="Chromosome"/>
</dbReference>
<dbReference type="Proteomes" id="UP000000594">
    <property type="component" value="Chromosome"/>
</dbReference>
<dbReference type="GO" id="GO:0005737">
    <property type="term" value="C:cytoplasm"/>
    <property type="evidence" value="ECO:0007669"/>
    <property type="project" value="UniProtKB-SubCell"/>
</dbReference>
<dbReference type="GO" id="GO:0005524">
    <property type="term" value="F:ATP binding"/>
    <property type="evidence" value="ECO:0007669"/>
    <property type="project" value="UniProtKB-KW"/>
</dbReference>
<dbReference type="GO" id="GO:0004359">
    <property type="term" value="F:glutaminase activity"/>
    <property type="evidence" value="ECO:0007669"/>
    <property type="project" value="UniProtKB-EC"/>
</dbReference>
<dbReference type="GO" id="GO:0004642">
    <property type="term" value="F:phosphoribosylformylglycinamidine synthase activity"/>
    <property type="evidence" value="ECO:0007669"/>
    <property type="project" value="UniProtKB-UniRule"/>
</dbReference>
<dbReference type="GO" id="GO:0006189">
    <property type="term" value="P:'de novo' IMP biosynthetic process"/>
    <property type="evidence" value="ECO:0007669"/>
    <property type="project" value="UniProtKB-UniRule"/>
</dbReference>
<dbReference type="CDD" id="cd01740">
    <property type="entry name" value="GATase1_FGAR_AT"/>
    <property type="match status" value="1"/>
</dbReference>
<dbReference type="FunFam" id="3.40.50.880:FF:000019">
    <property type="entry name" value="Phosphoribosylformylglycinamidine synthase subunit PurQ"/>
    <property type="match status" value="1"/>
</dbReference>
<dbReference type="Gene3D" id="3.40.50.880">
    <property type="match status" value="1"/>
</dbReference>
<dbReference type="HAMAP" id="MF_00421">
    <property type="entry name" value="PurQ"/>
    <property type="match status" value="1"/>
</dbReference>
<dbReference type="InterPro" id="IPR029062">
    <property type="entry name" value="Class_I_gatase-like"/>
</dbReference>
<dbReference type="InterPro" id="IPR010075">
    <property type="entry name" value="PRibForGlyAmidine_synth_PurQ"/>
</dbReference>
<dbReference type="NCBIfam" id="TIGR01737">
    <property type="entry name" value="FGAM_synth_I"/>
    <property type="match status" value="1"/>
</dbReference>
<dbReference type="NCBIfam" id="NF002957">
    <property type="entry name" value="PRK03619.1"/>
    <property type="match status" value="1"/>
</dbReference>
<dbReference type="PANTHER" id="PTHR47552">
    <property type="entry name" value="PHOSPHORIBOSYLFORMYLGLYCINAMIDINE SYNTHASE SUBUNIT PURQ"/>
    <property type="match status" value="1"/>
</dbReference>
<dbReference type="PANTHER" id="PTHR47552:SF1">
    <property type="entry name" value="PHOSPHORIBOSYLFORMYLGLYCINAMIDINE SYNTHASE SUBUNIT PURQ"/>
    <property type="match status" value="1"/>
</dbReference>
<dbReference type="Pfam" id="PF13507">
    <property type="entry name" value="GATase_5"/>
    <property type="match status" value="1"/>
</dbReference>
<dbReference type="PIRSF" id="PIRSF001586">
    <property type="entry name" value="FGAM_synth_I"/>
    <property type="match status" value="1"/>
</dbReference>
<dbReference type="SMART" id="SM01211">
    <property type="entry name" value="GATase_5"/>
    <property type="match status" value="1"/>
</dbReference>
<dbReference type="SUPFAM" id="SSF52317">
    <property type="entry name" value="Class I glutamine amidotransferase-like"/>
    <property type="match status" value="1"/>
</dbReference>
<dbReference type="PROSITE" id="PS51273">
    <property type="entry name" value="GATASE_TYPE_1"/>
    <property type="match status" value="1"/>
</dbReference>
<sequence>MKFAVIVFPGSNCDVDMFHAIKDELGEEVDYVWHDTENLDEYDAILLPGGFSYGDYLRCGAISRFANAMKAVQKAAEQGKPILGVCNGFQILVESGLLPGALMRNENLKFMCRTVQLRVENNETMFTSQYEKDEVINIPIAHGEGNYYCDEETLKQLEENNQIAFRYVENPNGSVSDIAGIVNEKGNVLGMMPHPERAVDELLGGAEGLKVFQSILKQWRETYVVNA</sequence>
<gene>
    <name evidence="1" type="primary">purQ</name>
    <name type="ordered locus">BA_0293</name>
    <name type="ordered locus">GBAA_0293</name>
    <name type="ordered locus">BAS0280</name>
</gene>
<evidence type="ECO:0000255" key="1">
    <source>
        <dbReference type="HAMAP-Rule" id="MF_00421"/>
    </source>
</evidence>
<name>PURQ_BACAN</name>
<proteinExistence type="inferred from homology"/>
<protein>
    <recommendedName>
        <fullName evidence="1">Phosphoribosylformylglycinamidine synthase subunit PurQ</fullName>
        <shortName evidence="1">FGAM synthase</shortName>
        <ecNumber evidence="1">6.3.5.3</ecNumber>
    </recommendedName>
    <alternativeName>
        <fullName evidence="1">Formylglycinamide ribonucleotide amidotransferase subunit I</fullName>
        <shortName evidence="1">FGAR amidotransferase I</shortName>
        <shortName evidence="1">FGAR-AT I</shortName>
    </alternativeName>
    <alternativeName>
        <fullName evidence="1">Glutaminase PurQ</fullName>
        <ecNumber evidence="1">3.5.1.2</ecNumber>
    </alternativeName>
    <alternativeName>
        <fullName evidence="1">Phosphoribosylformylglycinamidine synthase subunit I</fullName>
    </alternativeName>
</protein>
<organism>
    <name type="scientific">Bacillus anthracis</name>
    <dbReference type="NCBI Taxonomy" id="1392"/>
    <lineage>
        <taxon>Bacteria</taxon>
        <taxon>Bacillati</taxon>
        <taxon>Bacillota</taxon>
        <taxon>Bacilli</taxon>
        <taxon>Bacillales</taxon>
        <taxon>Bacillaceae</taxon>
        <taxon>Bacillus</taxon>
        <taxon>Bacillus cereus group</taxon>
    </lineage>
</organism>